<gene>
    <name type="primary">bioF</name>
    <name type="ordered locus">BCB4264_A4228</name>
</gene>
<organism>
    <name type="scientific">Bacillus cereus (strain B4264)</name>
    <dbReference type="NCBI Taxonomy" id="405532"/>
    <lineage>
        <taxon>Bacteria</taxon>
        <taxon>Bacillati</taxon>
        <taxon>Bacillota</taxon>
        <taxon>Bacilli</taxon>
        <taxon>Bacillales</taxon>
        <taxon>Bacillaceae</taxon>
        <taxon>Bacillus</taxon>
        <taxon>Bacillus cereus group</taxon>
    </lineage>
</organism>
<accession>B7HAZ0</accession>
<reference key="1">
    <citation type="submission" date="2008-10" db="EMBL/GenBank/DDBJ databases">
        <title>Genome sequence of Bacillus cereus B4264.</title>
        <authorList>
            <person name="Dodson R.J."/>
            <person name="Durkin A.S."/>
            <person name="Rosovitz M.J."/>
            <person name="Rasko D.A."/>
            <person name="Hoffmaster A."/>
            <person name="Ravel J."/>
            <person name="Sutton G."/>
        </authorList>
    </citation>
    <scope>NUCLEOTIDE SEQUENCE [LARGE SCALE GENOMIC DNA]</scope>
    <source>
        <strain>B4264</strain>
    </source>
</reference>
<keyword id="KW-0093">Biotin biosynthesis</keyword>
<keyword id="KW-0663">Pyridoxal phosphate</keyword>
<keyword id="KW-0808">Transferase</keyword>
<dbReference type="EC" id="2.3.1.47"/>
<dbReference type="EMBL" id="CP001176">
    <property type="protein sequence ID" value="ACK62434.1"/>
    <property type="molecule type" value="Genomic_DNA"/>
</dbReference>
<dbReference type="RefSeq" id="WP_001077285.1">
    <property type="nucleotide sequence ID" value="NZ_VEHB01000002.1"/>
</dbReference>
<dbReference type="SMR" id="B7HAZ0"/>
<dbReference type="KEGG" id="bcb:BCB4264_A4228"/>
<dbReference type="HOGENOM" id="CLU_015846_11_2_9"/>
<dbReference type="UniPathway" id="UPA00078"/>
<dbReference type="Proteomes" id="UP000007096">
    <property type="component" value="Chromosome"/>
</dbReference>
<dbReference type="GO" id="GO:0008710">
    <property type="term" value="F:8-amino-7-oxononanoate synthase activity"/>
    <property type="evidence" value="ECO:0007669"/>
    <property type="project" value="UniProtKB-EC"/>
</dbReference>
<dbReference type="GO" id="GO:0030170">
    <property type="term" value="F:pyridoxal phosphate binding"/>
    <property type="evidence" value="ECO:0007669"/>
    <property type="project" value="InterPro"/>
</dbReference>
<dbReference type="GO" id="GO:0009102">
    <property type="term" value="P:biotin biosynthetic process"/>
    <property type="evidence" value="ECO:0007669"/>
    <property type="project" value="UniProtKB-UniPathway"/>
</dbReference>
<dbReference type="CDD" id="cd06454">
    <property type="entry name" value="KBL_like"/>
    <property type="match status" value="1"/>
</dbReference>
<dbReference type="FunFam" id="3.40.640.10:FF:000006">
    <property type="entry name" value="5-aminolevulinate synthase, mitochondrial"/>
    <property type="match status" value="1"/>
</dbReference>
<dbReference type="Gene3D" id="3.90.1150.10">
    <property type="entry name" value="Aspartate Aminotransferase, domain 1"/>
    <property type="match status" value="1"/>
</dbReference>
<dbReference type="Gene3D" id="3.40.640.10">
    <property type="entry name" value="Type I PLP-dependent aspartate aminotransferase-like (Major domain)"/>
    <property type="match status" value="1"/>
</dbReference>
<dbReference type="InterPro" id="IPR001917">
    <property type="entry name" value="Aminotrans_II_pyridoxalP_BS"/>
</dbReference>
<dbReference type="InterPro" id="IPR004839">
    <property type="entry name" value="Aminotransferase_I/II_large"/>
</dbReference>
<dbReference type="InterPro" id="IPR050087">
    <property type="entry name" value="AON_synthase_class-II"/>
</dbReference>
<dbReference type="InterPro" id="IPR004723">
    <property type="entry name" value="AONS_Archaea/Proteobacteria"/>
</dbReference>
<dbReference type="InterPro" id="IPR015424">
    <property type="entry name" value="PyrdxlP-dep_Trfase"/>
</dbReference>
<dbReference type="InterPro" id="IPR015421">
    <property type="entry name" value="PyrdxlP-dep_Trfase_major"/>
</dbReference>
<dbReference type="InterPro" id="IPR015422">
    <property type="entry name" value="PyrdxlP-dep_Trfase_small"/>
</dbReference>
<dbReference type="NCBIfam" id="TIGR00858">
    <property type="entry name" value="bioF"/>
    <property type="match status" value="1"/>
</dbReference>
<dbReference type="PANTHER" id="PTHR13693:SF100">
    <property type="entry name" value="8-AMINO-7-OXONONANOATE SYNTHASE"/>
    <property type="match status" value="1"/>
</dbReference>
<dbReference type="PANTHER" id="PTHR13693">
    <property type="entry name" value="CLASS II AMINOTRANSFERASE/8-AMINO-7-OXONONANOATE SYNTHASE"/>
    <property type="match status" value="1"/>
</dbReference>
<dbReference type="Pfam" id="PF00155">
    <property type="entry name" value="Aminotran_1_2"/>
    <property type="match status" value="1"/>
</dbReference>
<dbReference type="SUPFAM" id="SSF53383">
    <property type="entry name" value="PLP-dependent transferases"/>
    <property type="match status" value="1"/>
</dbReference>
<dbReference type="PROSITE" id="PS00599">
    <property type="entry name" value="AA_TRANSFER_CLASS_2"/>
    <property type="match status" value="1"/>
</dbReference>
<protein>
    <recommendedName>
        <fullName>Putative 8-amino-7-oxononanoate synthase</fullName>
        <shortName>AONS</shortName>
        <ecNumber>2.3.1.47</ecNumber>
    </recommendedName>
    <alternativeName>
        <fullName>7-keto-8-amino-pelargonic acid synthase</fullName>
        <shortName>7-KAP synthase</shortName>
    </alternativeName>
    <alternativeName>
        <fullName>8-amino-7-ketopelargonate synthase</fullName>
    </alternativeName>
</protein>
<proteinExistence type="inferred from homology"/>
<comment type="function">
    <text evidence="1">Catalyzes the decarboxylative condensation of pimeloyl-[acyl-carrier protein] and L-alanine to produce 8-amino-7-oxononanoate (AON), [acyl-carrier protein], and carbon dioxide.</text>
</comment>
<comment type="catalytic activity">
    <reaction>
        <text>6-carboxyhexanoyl-[ACP] + L-alanine + H(+) = (8S)-8-amino-7-oxononanoate + holo-[ACP] + CO2</text>
        <dbReference type="Rhea" id="RHEA:42288"/>
        <dbReference type="Rhea" id="RHEA-COMP:9685"/>
        <dbReference type="Rhea" id="RHEA-COMP:9955"/>
        <dbReference type="ChEBI" id="CHEBI:15378"/>
        <dbReference type="ChEBI" id="CHEBI:16526"/>
        <dbReference type="ChEBI" id="CHEBI:57972"/>
        <dbReference type="ChEBI" id="CHEBI:64479"/>
        <dbReference type="ChEBI" id="CHEBI:78846"/>
        <dbReference type="ChEBI" id="CHEBI:149468"/>
        <dbReference type="EC" id="2.3.1.47"/>
    </reaction>
</comment>
<comment type="cofactor">
    <cofactor evidence="1">
        <name>pyridoxal 5'-phosphate</name>
        <dbReference type="ChEBI" id="CHEBI:597326"/>
    </cofactor>
</comment>
<comment type="pathway">
    <text>Cofactor biosynthesis; biotin biosynthesis.</text>
</comment>
<comment type="subunit">
    <text evidence="1">Homodimer.</text>
</comment>
<comment type="similarity">
    <text evidence="2">Belongs to the class-II pyridoxal-phosphate-dependent aminotransferase family. BioF subfamily.</text>
</comment>
<feature type="chain" id="PRO_0000380910" description="Putative 8-amino-7-oxononanoate synthase">
    <location>
        <begin position="1"/>
        <end position="395"/>
    </location>
</feature>
<feature type="binding site" evidence="1">
    <location>
        <position position="23"/>
    </location>
    <ligand>
        <name>substrate</name>
    </ligand>
</feature>
<feature type="binding site" evidence="1">
    <location>
        <begin position="110"/>
        <end position="111"/>
    </location>
    <ligand>
        <name>pyridoxal 5'-phosphate</name>
        <dbReference type="ChEBI" id="CHEBI:597326"/>
    </ligand>
</feature>
<feature type="binding site" evidence="1">
    <location>
        <position position="135"/>
    </location>
    <ligand>
        <name>substrate</name>
    </ligand>
</feature>
<feature type="binding site" evidence="1">
    <location>
        <position position="182"/>
    </location>
    <ligand>
        <name>pyridoxal 5'-phosphate</name>
        <dbReference type="ChEBI" id="CHEBI:597326"/>
    </ligand>
</feature>
<feature type="binding site" evidence="1">
    <location>
        <begin position="207"/>
        <end position="210"/>
    </location>
    <ligand>
        <name>pyridoxal 5'-phosphate</name>
        <dbReference type="ChEBI" id="CHEBI:597326"/>
    </ligand>
</feature>
<feature type="binding site" evidence="1">
    <location>
        <begin position="239"/>
        <end position="242"/>
    </location>
    <ligand>
        <name>pyridoxal 5'-phosphate</name>
        <dbReference type="ChEBI" id="CHEBI:597326"/>
    </ligand>
</feature>
<feature type="binding site" evidence="1">
    <location>
        <position position="356"/>
    </location>
    <ligand>
        <name>substrate</name>
    </ligand>
</feature>
<feature type="modified residue" description="N6-(pyridoxal phosphate)lysine" evidence="1">
    <location>
        <position position="242"/>
    </location>
</feature>
<name>BIOF_BACC4</name>
<evidence type="ECO:0000250" key="1"/>
<evidence type="ECO:0000305" key="2"/>
<sequence>MNQTWRAHLQCKLQQLHEQGQYRDLHVTEKAEETWLIRDKKRMLNLASNNYLGLAGDERLKEAAIACTKRYGTGATASRLVVGNHLLYEEVERSICDWKGTERALIVNSGYTANIGAISSLASRHDIVFSDKLNHASIVDGIILSGAEHKRYRHNDLDHLEKLLKMASPEKRKLIVTDTVFSMDGDTAYLRDLVQLKEKYGAIIIVDEAHASGIYGIGGAGLSHIEKNLSQKIDIHMGTFSKALGCYGAYLTGDEIYIEYLQNMMRSFIFTTALPPSTLGAVQKAIEIVKEDNERRENLIANGEYFRTKLRDAGFDIGNSSTHIVPIVVGSNEHALRFSKRLQEAGIAAIAIRPPTVPVHSSRIRFAVTSQHTIADLKWAIDRIIHIAKEEELFV</sequence>